<accession>O00631</accession>
<accession>Q6ICV3</accession>
<proteinExistence type="evidence at protein level"/>
<keyword id="KW-0002">3D-structure</keyword>
<keyword id="KW-0256">Endoplasmic reticulum</keyword>
<keyword id="KW-0472">Membrane</keyword>
<keyword id="KW-1185">Reference proteome</keyword>
<keyword id="KW-0703">Sarcoplasmic reticulum</keyword>
<keyword id="KW-0812">Transmembrane</keyword>
<keyword id="KW-1133">Transmembrane helix</keyword>
<name>SARCO_HUMAN</name>
<protein>
    <recommendedName>
        <fullName evidence="8">Sarcolipin</fullName>
    </recommendedName>
</protein>
<comment type="function">
    <text evidence="2 4 7">Reversibly inhibits the activity of ATP2A1/SERCA1 and ATP2A2/SERCA2 in sarcoplasmic reticulum by decreasing the apparent affinity of the ATPase for Ca(2+) (PubMed:11781085, PubMed:9575189). Also inhibits the activity of ATP2A3/SERCA3 (By similarity). Modulates calcium re-uptake during muscle relaxation and plays an important role in calcium homeostasis in muscle. Required for muscle-based, non-shivering thermogenesis (By similarity).</text>
</comment>
<comment type="subunit">
    <text evidence="1 2 5 6">Homooligomer (PubMed:36523160). Can also form heterooligomers with other sarcoplasmic/endoplasmic reticulum calcium ATPase (SERCA) regulators ARLN, ERLN, PLN and STRIT1/DWORF (PubMed:36523160). Monomer (By similarity). Interacts with calcium ATPase ATP2A1/SERCA1. Interacts as a monomer with ATP2A2/SERCA2; the interaction decreases ATP2A2 Ca(2+) affinity (PubMed:28890335). Interacts with VMP1; VMP1 competes with PLN and SLN to prevent them from forming an inhibitory complex with ATP2A2 (PubMed:28890335).</text>
</comment>
<comment type="interaction">
    <interactant intactId="EBI-10180786">
        <id>O00631</id>
    </interactant>
    <interactant intactId="EBI-749265">
        <id>Q8N6L0</id>
        <label>KASH5</label>
    </interactant>
    <organismsDiffer>false</organismsDiffer>
    <experiments>3</experiments>
</comment>
<comment type="interaction">
    <interactant intactId="EBI-10180786">
        <id>O00631</id>
    </interactant>
    <interactant intactId="EBI-7131783">
        <id>Q8N205</id>
        <label>SYNE4</label>
    </interactant>
    <organismsDiffer>false</organismsDiffer>
    <experiments>3</experiments>
</comment>
<comment type="interaction">
    <interactant intactId="EBI-10180786">
        <id>O00631</id>
    </interactant>
    <interactant intactId="EBI-8649725">
        <id>Q9BSE2</id>
        <label>TMEM79</label>
    </interactant>
    <organismsDiffer>false</organismsDiffer>
    <experiments>4</experiments>
</comment>
<comment type="subcellular location">
    <subcellularLocation>
        <location evidence="4 7">Sarcoplasmic reticulum membrane</location>
        <topology evidence="3">Single-pass membrane protein</topology>
    </subcellularLocation>
    <subcellularLocation>
        <location evidence="1">Endoplasmic reticulum membrane</location>
        <topology evidence="3">Single-pass membrane protein</topology>
    </subcellularLocation>
</comment>
<comment type="similarity">
    <text evidence="8">Belongs to the sarcolipin family.</text>
</comment>
<feature type="peptide" id="PRO_0000045898" description="Sarcolipin">
    <location>
        <begin position="1"/>
        <end position="31"/>
    </location>
</feature>
<feature type="topological domain" description="Cytoplasmic" evidence="7">
    <location>
        <begin position="1"/>
        <end position="7"/>
    </location>
</feature>
<feature type="transmembrane region" description="Helical">
    <location>
        <begin position="8"/>
        <end position="26"/>
    </location>
</feature>
<feature type="topological domain" description="Lumenal" evidence="7">
    <location>
        <begin position="27"/>
        <end position="31"/>
    </location>
</feature>
<feature type="strand" evidence="10">
    <location>
        <begin position="5"/>
        <end position="8"/>
    </location>
</feature>
<feature type="helix" evidence="10">
    <location>
        <begin position="9"/>
        <end position="25"/>
    </location>
</feature>
<reference key="1">
    <citation type="journal article" date="1997" name="Genomics">
        <title>Characterization of the gene encoding human sarcolipin (SLN), a proteolipid associated with SERCA1: absence of structural mutations in five patients with Brody disease.</title>
        <authorList>
            <person name="Odermatt A."/>
            <person name="Taschner P.E.M."/>
            <person name="Scherer S.W."/>
            <person name="Beatty B."/>
            <person name="Khanna V.K."/>
            <person name="Cornblath D.R."/>
            <person name="Chaudhry V."/>
            <person name="Yee W.-C."/>
            <person name="Schrank B."/>
            <person name="Karpati G."/>
            <person name="Breuning M.H."/>
            <person name="Knoers N."/>
            <person name="Maclennan D.H."/>
        </authorList>
    </citation>
    <scope>NUCLEOTIDE SEQUENCE [GENOMIC DNA / MRNA]</scope>
</reference>
<reference key="2">
    <citation type="journal article" date="2004" name="Nat. Genet.">
        <title>Complete sequencing and characterization of 21,243 full-length human cDNAs.</title>
        <authorList>
            <person name="Ota T."/>
            <person name="Suzuki Y."/>
            <person name="Nishikawa T."/>
            <person name="Otsuki T."/>
            <person name="Sugiyama T."/>
            <person name="Irie R."/>
            <person name="Wakamatsu A."/>
            <person name="Hayashi K."/>
            <person name="Sato H."/>
            <person name="Nagai K."/>
            <person name="Kimura K."/>
            <person name="Makita H."/>
            <person name="Sekine M."/>
            <person name="Obayashi M."/>
            <person name="Nishi T."/>
            <person name="Shibahara T."/>
            <person name="Tanaka T."/>
            <person name="Ishii S."/>
            <person name="Yamamoto J."/>
            <person name="Saito K."/>
            <person name="Kawai Y."/>
            <person name="Isono Y."/>
            <person name="Nakamura Y."/>
            <person name="Nagahari K."/>
            <person name="Murakami K."/>
            <person name="Yasuda T."/>
            <person name="Iwayanagi T."/>
            <person name="Wagatsuma M."/>
            <person name="Shiratori A."/>
            <person name="Sudo H."/>
            <person name="Hosoiri T."/>
            <person name="Kaku Y."/>
            <person name="Kodaira H."/>
            <person name="Kondo H."/>
            <person name="Sugawara M."/>
            <person name="Takahashi M."/>
            <person name="Kanda K."/>
            <person name="Yokoi T."/>
            <person name="Furuya T."/>
            <person name="Kikkawa E."/>
            <person name="Omura Y."/>
            <person name="Abe K."/>
            <person name="Kamihara K."/>
            <person name="Katsuta N."/>
            <person name="Sato K."/>
            <person name="Tanikawa M."/>
            <person name="Yamazaki M."/>
            <person name="Ninomiya K."/>
            <person name="Ishibashi T."/>
            <person name="Yamashita H."/>
            <person name="Murakawa K."/>
            <person name="Fujimori K."/>
            <person name="Tanai H."/>
            <person name="Kimata M."/>
            <person name="Watanabe M."/>
            <person name="Hiraoka S."/>
            <person name="Chiba Y."/>
            <person name="Ishida S."/>
            <person name="Ono Y."/>
            <person name="Takiguchi S."/>
            <person name="Watanabe S."/>
            <person name="Yosida M."/>
            <person name="Hotuta T."/>
            <person name="Kusano J."/>
            <person name="Kanehori K."/>
            <person name="Takahashi-Fujii A."/>
            <person name="Hara H."/>
            <person name="Tanase T.-O."/>
            <person name="Nomura Y."/>
            <person name="Togiya S."/>
            <person name="Komai F."/>
            <person name="Hara R."/>
            <person name="Takeuchi K."/>
            <person name="Arita M."/>
            <person name="Imose N."/>
            <person name="Musashino K."/>
            <person name="Yuuki H."/>
            <person name="Oshima A."/>
            <person name="Sasaki N."/>
            <person name="Aotsuka S."/>
            <person name="Yoshikawa Y."/>
            <person name="Matsunawa H."/>
            <person name="Ichihara T."/>
            <person name="Shiohata N."/>
            <person name="Sano S."/>
            <person name="Moriya S."/>
            <person name="Momiyama H."/>
            <person name="Satoh N."/>
            <person name="Takami S."/>
            <person name="Terashima Y."/>
            <person name="Suzuki O."/>
            <person name="Nakagawa S."/>
            <person name="Senoh A."/>
            <person name="Mizoguchi H."/>
            <person name="Goto Y."/>
            <person name="Shimizu F."/>
            <person name="Wakebe H."/>
            <person name="Hishigaki H."/>
            <person name="Watanabe T."/>
            <person name="Sugiyama A."/>
            <person name="Takemoto M."/>
            <person name="Kawakami B."/>
            <person name="Yamazaki M."/>
            <person name="Watanabe K."/>
            <person name="Kumagai A."/>
            <person name="Itakura S."/>
            <person name="Fukuzumi Y."/>
            <person name="Fujimori Y."/>
            <person name="Komiyama M."/>
            <person name="Tashiro H."/>
            <person name="Tanigami A."/>
            <person name="Fujiwara T."/>
            <person name="Ono T."/>
            <person name="Yamada K."/>
            <person name="Fujii Y."/>
            <person name="Ozaki K."/>
            <person name="Hirao M."/>
            <person name="Ohmori Y."/>
            <person name="Kawabata A."/>
            <person name="Hikiji T."/>
            <person name="Kobatake N."/>
            <person name="Inagaki H."/>
            <person name="Ikema Y."/>
            <person name="Okamoto S."/>
            <person name="Okitani R."/>
            <person name="Kawakami T."/>
            <person name="Noguchi S."/>
            <person name="Itoh T."/>
            <person name="Shigeta K."/>
            <person name="Senba T."/>
            <person name="Matsumura K."/>
            <person name="Nakajima Y."/>
            <person name="Mizuno T."/>
            <person name="Morinaga M."/>
            <person name="Sasaki M."/>
            <person name="Togashi T."/>
            <person name="Oyama M."/>
            <person name="Hata H."/>
            <person name="Watanabe M."/>
            <person name="Komatsu T."/>
            <person name="Mizushima-Sugano J."/>
            <person name="Satoh T."/>
            <person name="Shirai Y."/>
            <person name="Takahashi Y."/>
            <person name="Nakagawa K."/>
            <person name="Okumura K."/>
            <person name="Nagase T."/>
            <person name="Nomura N."/>
            <person name="Kikuchi H."/>
            <person name="Masuho Y."/>
            <person name="Yamashita R."/>
            <person name="Nakai K."/>
            <person name="Yada T."/>
            <person name="Nakamura Y."/>
            <person name="Ohara O."/>
            <person name="Isogai T."/>
            <person name="Sugano S."/>
        </authorList>
    </citation>
    <scope>NUCLEOTIDE SEQUENCE [LARGE SCALE MRNA]</scope>
    <source>
        <tissue>Skeletal muscle</tissue>
    </source>
</reference>
<reference key="3">
    <citation type="submission" date="2004-05" db="EMBL/GenBank/DDBJ databases">
        <title>Cloning of human full open reading frames in Gateway(TM) system entry vector (pDONR201).</title>
        <authorList>
            <person name="Ebert L."/>
            <person name="Schick M."/>
            <person name="Neubert P."/>
            <person name="Schatten R."/>
            <person name="Henze S."/>
            <person name="Korn B."/>
        </authorList>
    </citation>
    <scope>NUCLEOTIDE SEQUENCE [LARGE SCALE MRNA]</scope>
</reference>
<reference key="4">
    <citation type="journal article" date="2004" name="Genome Res.">
        <title>The status, quality, and expansion of the NIH full-length cDNA project: the Mammalian Gene Collection (MGC).</title>
        <authorList>
            <consortium name="The MGC Project Team"/>
        </authorList>
    </citation>
    <scope>NUCLEOTIDE SEQUENCE [LARGE SCALE MRNA]</scope>
    <source>
        <tissue>PNS</tissue>
    </source>
</reference>
<reference key="5">
    <citation type="journal article" date="1998" name="J. Biol. Chem.">
        <title>Sarcolipin regulates the activity of SERCA1, the fast-twitch skeletal muscle sarcoplasmic reticulum Ca2+-ATPase.</title>
        <authorList>
            <person name="Odermatt A."/>
            <person name="Becker S."/>
            <person name="Khanna V.K."/>
            <person name="Kurzydlowski K."/>
            <person name="Leisner E."/>
            <person name="Pette D."/>
            <person name="MacLennan D.H."/>
        </authorList>
    </citation>
    <scope>FUNCTION</scope>
    <scope>SUBCELLULAR LOCATION</scope>
    <scope>TOPOLOGY</scope>
</reference>
<reference key="6">
    <citation type="journal article" date="2017" name="Mol. Cell">
        <title>The ER-Localized Transmembrane Protein EPG-3/VMP1 Regulates SERCA Activity to Control ER-Isolation Membrane Contacts for Autophagosome Formation.</title>
        <authorList>
            <person name="Zhao Y.G."/>
            <person name="Chen Y."/>
            <person name="Miao G."/>
            <person name="Zhao H."/>
            <person name="Qu W."/>
            <person name="Li D."/>
            <person name="Wang Z."/>
            <person name="Liu N."/>
            <person name="Li L."/>
            <person name="Chen S."/>
            <person name="Liu P."/>
            <person name="Feng D."/>
            <person name="Zhang H."/>
        </authorList>
    </citation>
    <scope>INTERACTION WITH ATP2A2 AND VMP1</scope>
    <scope>FUNCTION</scope>
</reference>
<reference key="7">
    <citation type="journal article" date="2023" name="Biophys. J.">
        <title>Micropeptide hetero-oligomerization adds complexity to the calcium pump regulatory network.</title>
        <authorList>
            <person name="Phillips T.A."/>
            <person name="Hauck G.T."/>
            <person name="Pribadi M.P."/>
            <person name="Cho E.E."/>
            <person name="Cleary S.R."/>
            <person name="Robia S.L."/>
        </authorList>
    </citation>
    <scope>SUBUNIT</scope>
</reference>
<reference key="8">
    <citation type="journal article" date="2002" name="Biochemistry">
        <title>Structure and orientation of sarcolipin in lipid environments.</title>
        <authorList>
            <person name="Mascioni A."/>
            <person name="Karim C."/>
            <person name="Barany G."/>
            <person name="Thomas D.D."/>
            <person name="Veglia G."/>
        </authorList>
    </citation>
    <scope>STRUCTURE BY NMR</scope>
    <scope>FUNCTION</scope>
    <scope>SUBCELLULAR LOCATION</scope>
</reference>
<organism>
    <name type="scientific">Homo sapiens</name>
    <name type="common">Human</name>
    <dbReference type="NCBI Taxonomy" id="9606"/>
    <lineage>
        <taxon>Eukaryota</taxon>
        <taxon>Metazoa</taxon>
        <taxon>Chordata</taxon>
        <taxon>Craniata</taxon>
        <taxon>Vertebrata</taxon>
        <taxon>Euteleostomi</taxon>
        <taxon>Mammalia</taxon>
        <taxon>Eutheria</taxon>
        <taxon>Euarchontoglires</taxon>
        <taxon>Primates</taxon>
        <taxon>Haplorrhini</taxon>
        <taxon>Catarrhini</taxon>
        <taxon>Hominidae</taxon>
        <taxon>Homo</taxon>
    </lineage>
</organism>
<evidence type="ECO:0000250" key="1">
    <source>
        <dbReference type="UniProtKB" id="P42532"/>
    </source>
</evidence>
<evidence type="ECO:0000250" key="2">
    <source>
        <dbReference type="UniProtKB" id="Q9CQD6"/>
    </source>
</evidence>
<evidence type="ECO:0000255" key="3"/>
<evidence type="ECO:0000269" key="4">
    <source>
    </source>
</evidence>
<evidence type="ECO:0000269" key="5">
    <source>
    </source>
</evidence>
<evidence type="ECO:0000269" key="6">
    <source>
    </source>
</evidence>
<evidence type="ECO:0000269" key="7">
    <source>
    </source>
</evidence>
<evidence type="ECO:0000305" key="8"/>
<evidence type="ECO:0000312" key="9">
    <source>
        <dbReference type="HGNC" id="HGNC:11089"/>
    </source>
</evidence>
<evidence type="ECO:0007829" key="10">
    <source>
        <dbReference type="PDB" id="1JDM"/>
    </source>
</evidence>
<gene>
    <name evidence="9" type="primary">SLN</name>
</gene>
<sequence>MGINTRELFLNFTIVLITVILMWLLVRSYQY</sequence>
<dbReference type="EMBL" id="U96094">
    <property type="protein sequence ID" value="AAB86981.1"/>
    <property type="molecule type" value="mRNA"/>
</dbReference>
<dbReference type="EMBL" id="U96093">
    <property type="protein sequence ID" value="AAB86980.1"/>
    <property type="molecule type" value="Genomic_DNA"/>
</dbReference>
<dbReference type="EMBL" id="AK312097">
    <property type="protein sequence ID" value="BAG35033.1"/>
    <property type="molecule type" value="mRNA"/>
</dbReference>
<dbReference type="EMBL" id="CR450290">
    <property type="protein sequence ID" value="CAG29286.1"/>
    <property type="molecule type" value="mRNA"/>
</dbReference>
<dbReference type="EMBL" id="BC094685">
    <property type="protein sequence ID" value="AAH94685.1"/>
    <property type="molecule type" value="mRNA"/>
</dbReference>
<dbReference type="EMBL" id="BC104150">
    <property type="protein sequence ID" value="AAI04151.1"/>
    <property type="molecule type" value="mRNA"/>
</dbReference>
<dbReference type="EMBL" id="BC104185">
    <property type="protein sequence ID" value="AAI04186.1"/>
    <property type="molecule type" value="mRNA"/>
</dbReference>
<dbReference type="EMBL" id="BC113930">
    <property type="protein sequence ID" value="AAI13931.1"/>
    <property type="molecule type" value="mRNA"/>
</dbReference>
<dbReference type="EMBL" id="BC113987">
    <property type="protein sequence ID" value="AAI13988.1"/>
    <property type="molecule type" value="mRNA"/>
</dbReference>
<dbReference type="CCDS" id="CCDS31667.1"/>
<dbReference type="RefSeq" id="NP_003054.1">
    <property type="nucleotide sequence ID" value="NM_003063.3"/>
</dbReference>
<dbReference type="PDB" id="1JDM">
    <property type="method" value="NMR"/>
    <property type="chains" value="A=1-31"/>
</dbReference>
<dbReference type="PDBsum" id="1JDM"/>
<dbReference type="SMR" id="O00631"/>
<dbReference type="BioGRID" id="112474">
    <property type="interactions" value="9"/>
</dbReference>
<dbReference type="CORUM" id="O00631"/>
<dbReference type="DIP" id="DIP-61731N"/>
<dbReference type="FunCoup" id="O00631">
    <property type="interactions" value="9"/>
</dbReference>
<dbReference type="IntAct" id="O00631">
    <property type="interactions" value="5"/>
</dbReference>
<dbReference type="STRING" id="9606.ENSP00000435380"/>
<dbReference type="TCDB" id="1.A.50.2.1">
    <property type="family name" value="the phospholamban (ca(2+)-channel and ca(2+)-atpase regulator) (plb) family"/>
</dbReference>
<dbReference type="iPTMnet" id="O00631"/>
<dbReference type="PhosphoSitePlus" id="O00631"/>
<dbReference type="BioMuta" id="SLN"/>
<dbReference type="PaxDb" id="9606-ENSP00000435380"/>
<dbReference type="Antibodypedia" id="45530">
    <property type="antibodies" value="60 antibodies from 13 providers"/>
</dbReference>
<dbReference type="DNASU" id="6588"/>
<dbReference type="Ensembl" id="ENST00000305991.3">
    <property type="protein sequence ID" value="ENSP00000304707.2"/>
    <property type="gene ID" value="ENSG00000170290.4"/>
</dbReference>
<dbReference type="Ensembl" id="ENST00000525934.1">
    <property type="protein sequence ID" value="ENSP00000434189.1"/>
    <property type="gene ID" value="ENSG00000170290.4"/>
</dbReference>
<dbReference type="Ensembl" id="ENST00000531293.1">
    <property type="protein sequence ID" value="ENSP00000435380.1"/>
    <property type="gene ID" value="ENSG00000170290.4"/>
</dbReference>
<dbReference type="GeneID" id="6588"/>
<dbReference type="KEGG" id="hsa:6588"/>
<dbReference type="MANE-Select" id="ENST00000305991.3">
    <property type="protein sequence ID" value="ENSP00000304707.2"/>
    <property type="RefSeq nucleotide sequence ID" value="NM_003063.3"/>
    <property type="RefSeq protein sequence ID" value="NP_003054.1"/>
</dbReference>
<dbReference type="UCSC" id="uc001pjp.4">
    <property type="organism name" value="human"/>
</dbReference>
<dbReference type="AGR" id="HGNC:11089"/>
<dbReference type="CTD" id="6588"/>
<dbReference type="DisGeNET" id="6588"/>
<dbReference type="GeneCards" id="SLN"/>
<dbReference type="HGNC" id="HGNC:11089">
    <property type="gene designation" value="SLN"/>
</dbReference>
<dbReference type="HPA" id="ENSG00000170290">
    <property type="expression patterns" value="Group enriched (skeletal muscle, tongue)"/>
</dbReference>
<dbReference type="MIM" id="602203">
    <property type="type" value="gene"/>
</dbReference>
<dbReference type="neXtProt" id="NX_O00631"/>
<dbReference type="OpenTargets" id="ENSG00000170290"/>
<dbReference type="PharmGKB" id="PA35942"/>
<dbReference type="VEuPathDB" id="HostDB:ENSG00000170290"/>
<dbReference type="eggNOG" id="ENOG502TD28">
    <property type="taxonomic scope" value="Eukaryota"/>
</dbReference>
<dbReference type="GeneTree" id="ENSGT01090000260451"/>
<dbReference type="HOGENOM" id="CLU_221275_0_0_1"/>
<dbReference type="InParanoid" id="O00631"/>
<dbReference type="OrthoDB" id="9735832at2759"/>
<dbReference type="PAN-GO" id="O00631">
    <property type="GO annotations" value="1 GO annotation based on evolutionary models"/>
</dbReference>
<dbReference type="PhylomeDB" id="O00631"/>
<dbReference type="PathwayCommons" id="O00631"/>
<dbReference type="Reactome" id="R-HSA-5578775">
    <property type="pathway name" value="Ion homeostasis"/>
</dbReference>
<dbReference type="Reactome" id="R-HSA-936837">
    <property type="pathway name" value="Ion transport by P-type ATPases"/>
</dbReference>
<dbReference type="SignaLink" id="O00631"/>
<dbReference type="SIGNOR" id="O00631"/>
<dbReference type="BioGRID-ORCS" id="6588">
    <property type="hits" value="13 hits in 713 CRISPR screens"/>
</dbReference>
<dbReference type="EvolutionaryTrace" id="O00631"/>
<dbReference type="GeneWiki" id="Sarcolipin"/>
<dbReference type="GenomeRNAi" id="6588"/>
<dbReference type="Pharos" id="O00631">
    <property type="development level" value="Tbio"/>
</dbReference>
<dbReference type="PRO" id="PR:O00631"/>
<dbReference type="Proteomes" id="UP000005640">
    <property type="component" value="Chromosome 11"/>
</dbReference>
<dbReference type="Bgee" id="ENSG00000170290">
    <property type="expression patterns" value="Expressed in diaphragm and 138 other cell types or tissues"/>
</dbReference>
<dbReference type="ExpressionAtlas" id="O00631">
    <property type="expression patterns" value="baseline and differential"/>
</dbReference>
<dbReference type="GO" id="GO:0016020">
    <property type="term" value="C:membrane"/>
    <property type="evidence" value="ECO:0000303"/>
    <property type="project" value="UniProtKB"/>
</dbReference>
<dbReference type="GO" id="GO:0016529">
    <property type="term" value="C:sarcoplasmic reticulum"/>
    <property type="evidence" value="ECO:0000314"/>
    <property type="project" value="UniProtKB"/>
</dbReference>
<dbReference type="GO" id="GO:0033017">
    <property type="term" value="C:sarcoplasmic reticulum membrane"/>
    <property type="evidence" value="ECO:0000250"/>
    <property type="project" value="UniProtKB"/>
</dbReference>
<dbReference type="GO" id="GO:0051117">
    <property type="term" value="F:ATPase binding"/>
    <property type="evidence" value="ECO:0000250"/>
    <property type="project" value="BHF-UCL"/>
</dbReference>
<dbReference type="GO" id="GO:0004857">
    <property type="term" value="F:enzyme inhibitor activity"/>
    <property type="evidence" value="ECO:0000250"/>
    <property type="project" value="BHF-UCL"/>
</dbReference>
<dbReference type="GO" id="GO:0006816">
    <property type="term" value="P:calcium ion transport"/>
    <property type="evidence" value="ECO:0000303"/>
    <property type="project" value="UniProtKB"/>
</dbReference>
<dbReference type="GO" id="GO:1901895">
    <property type="term" value="P:negative regulation of ATPase-coupled calcium transmembrane transporter activity"/>
    <property type="evidence" value="ECO:0000314"/>
    <property type="project" value="UniProtKB"/>
</dbReference>
<dbReference type="GO" id="GO:0090281">
    <property type="term" value="P:negative regulation of calcium ion import"/>
    <property type="evidence" value="ECO:0000250"/>
    <property type="project" value="BHF-UCL"/>
</dbReference>
<dbReference type="GO" id="GO:1902081">
    <property type="term" value="P:negative regulation of calcium ion import into sarcoplasmic reticulum"/>
    <property type="evidence" value="ECO:0000250"/>
    <property type="project" value="BHF-UCL"/>
</dbReference>
<dbReference type="GO" id="GO:0043242">
    <property type="term" value="P:negative regulation of protein-containing complex disassembly"/>
    <property type="evidence" value="ECO:0000250"/>
    <property type="project" value="BHF-UCL"/>
</dbReference>
<dbReference type="GO" id="GO:0120162">
    <property type="term" value="P:positive regulation of cold-induced thermogenesis"/>
    <property type="evidence" value="ECO:0000250"/>
    <property type="project" value="YuBioLab"/>
</dbReference>
<dbReference type="GO" id="GO:1901881">
    <property type="term" value="P:positive regulation of protein depolymerization"/>
    <property type="evidence" value="ECO:0000250"/>
    <property type="project" value="BHF-UCL"/>
</dbReference>
<dbReference type="GO" id="GO:1901894">
    <property type="term" value="P:regulation of ATPase-coupled calcium transmembrane transporter activity"/>
    <property type="evidence" value="ECO:0000314"/>
    <property type="project" value="UniProtKB"/>
</dbReference>
<dbReference type="GO" id="GO:0051924">
    <property type="term" value="P:regulation of calcium ion transport"/>
    <property type="evidence" value="ECO:0000250"/>
    <property type="project" value="UniProtKB"/>
</dbReference>
<dbReference type="GO" id="GO:1901077">
    <property type="term" value="P:regulation of relaxation of muscle"/>
    <property type="evidence" value="ECO:0000250"/>
    <property type="project" value="UniProtKB"/>
</dbReference>
<dbReference type="GO" id="GO:0070296">
    <property type="term" value="P:sarcoplasmic reticulum calcium ion transport"/>
    <property type="evidence" value="ECO:0000250"/>
    <property type="project" value="UniProtKB"/>
</dbReference>
<dbReference type="CDD" id="cd20253">
    <property type="entry name" value="Sarcolipin"/>
    <property type="match status" value="1"/>
</dbReference>
<dbReference type="InterPro" id="IPR008028">
    <property type="entry name" value="Sarcolipin"/>
</dbReference>
<dbReference type="Pfam" id="PF05366">
    <property type="entry name" value="Sarcolipin"/>
    <property type="match status" value="1"/>
</dbReference>